<keyword id="KW-0002">3D-structure</keyword>
<keyword id="KW-0903">Direct protein sequencing</keyword>
<keyword id="KW-0687">Ribonucleoprotein</keyword>
<keyword id="KW-0689">Ribosomal protein</keyword>
<keyword id="KW-0694">RNA-binding</keyword>
<keyword id="KW-0699">rRNA-binding</keyword>
<proteinExistence type="evidence at protein level"/>
<feature type="initiator methionine" description="Removed" evidence="2">
    <location>
        <position position="1"/>
    </location>
</feature>
<feature type="chain" id="PRO_0000131622" description="Small ribosomal subunit protein uS5">
    <location>
        <begin position="2"/>
        <end position="162"/>
    </location>
</feature>
<feature type="domain" description="S5 DRBM">
    <location>
        <begin position="6"/>
        <end position="69"/>
    </location>
</feature>
<feature type="sequence conflict" description="In Ref. 2; AA sequence." evidence="3" ref="2">
    <original>P</original>
    <variation>D</variation>
    <location>
        <position position="2"/>
    </location>
</feature>
<feature type="sequence conflict" description="In Ref. 2; AA sequence." evidence="3" ref="2">
    <original>D</original>
    <variation>F</variation>
    <location>
        <position position="5"/>
    </location>
</feature>
<feature type="sequence conflict" description="In Ref. 2; AA sequence." evidence="3" ref="2">
    <original>R</original>
    <variation>V</variation>
    <location>
        <position position="24"/>
    </location>
</feature>
<feature type="strand" evidence="4">
    <location>
        <begin position="9"/>
        <end position="20"/>
    </location>
</feature>
<feature type="strand" evidence="4">
    <location>
        <begin position="23"/>
        <end position="35"/>
    </location>
</feature>
<feature type="strand" evidence="4">
    <location>
        <begin position="37"/>
        <end position="50"/>
    </location>
</feature>
<feature type="helix" evidence="4">
    <location>
        <begin position="51"/>
        <end position="63"/>
    </location>
</feature>
<feature type="strand" evidence="4">
    <location>
        <begin position="64"/>
        <end position="68"/>
    </location>
</feature>
<feature type="strand" evidence="4">
    <location>
        <begin position="72"/>
        <end position="75"/>
    </location>
</feature>
<feature type="strand" evidence="4">
    <location>
        <begin position="80"/>
        <end position="84"/>
    </location>
</feature>
<feature type="strand" evidence="4">
    <location>
        <begin position="87"/>
        <end position="93"/>
    </location>
</feature>
<feature type="helix" evidence="4">
    <location>
        <begin position="104"/>
        <end position="110"/>
    </location>
</feature>
<feature type="turn" evidence="4">
    <location>
        <begin position="111"/>
        <end position="114"/>
    </location>
</feature>
<feature type="strand" evidence="4">
    <location>
        <begin position="117"/>
        <end position="124"/>
    </location>
</feature>
<feature type="helix" evidence="4">
    <location>
        <begin position="128"/>
        <end position="139"/>
    </location>
</feature>
<feature type="helix" evidence="4">
    <location>
        <begin position="145"/>
        <end position="151"/>
    </location>
</feature>
<name>RS5_THETH</name>
<accession>P27152</accession>
<evidence type="ECO:0000250" key="1"/>
<evidence type="ECO:0000269" key="2">
    <source>
    </source>
</evidence>
<evidence type="ECO:0000305" key="3"/>
<evidence type="ECO:0007829" key="4">
    <source>
        <dbReference type="PDB" id="4V8X"/>
    </source>
</evidence>
<protein>
    <recommendedName>
        <fullName evidence="3">Small ribosomal subunit protein uS5</fullName>
    </recommendedName>
    <alternativeName>
        <fullName>30S ribosomal protein S5</fullName>
    </alternativeName>
</protein>
<reference key="1">
    <citation type="journal article" date="1997" name="Gene">
        <title>Sequencing and analysis of the Thermus thermophilus ribosomal protein gene cluster equivalent to the spectinomycin operon.</title>
        <authorList>
            <person name="Vysotskaya V.S."/>
            <person name="Shcherbakov D.V."/>
            <person name="Garber M.B."/>
        </authorList>
    </citation>
    <scope>NUCLEOTIDE SEQUENCE [GENOMIC DNA]</scope>
    <source>
        <strain>VK1</strain>
    </source>
</reference>
<reference key="2">
    <citation type="journal article" date="1992" name="Biochimie">
        <title>Ribosomal proteins from Thermus thermophilus for structural investigations.</title>
        <authorList>
            <person name="Garber M.B."/>
            <person name="Agalarov S.C."/>
            <person name="Eliseikina I.A."/>
            <person name="Fomenkova N.P."/>
            <person name="Nikonov S.V."/>
            <person name="Sedelnikova S.E."/>
            <person name="Shikaeva O.S."/>
            <person name="Vasiliev D."/>
            <person name="Zhdanov A.S."/>
            <person name="Liljas A."/>
            <person name="Svensson L.A."/>
        </authorList>
    </citation>
    <scope>PROTEIN SEQUENCE OF 2-26</scope>
    <source>
        <strain>VK1</strain>
    </source>
</reference>
<gene>
    <name type="primary">rpsE</name>
    <name type="synonym">rps5</name>
</gene>
<organism>
    <name type="scientific">Thermus thermophilus</name>
    <dbReference type="NCBI Taxonomy" id="274"/>
    <lineage>
        <taxon>Bacteria</taxon>
        <taxon>Thermotogati</taxon>
        <taxon>Deinococcota</taxon>
        <taxon>Deinococci</taxon>
        <taxon>Thermales</taxon>
        <taxon>Thermaceae</taxon>
        <taxon>Thermus</taxon>
    </lineage>
</organism>
<dbReference type="EMBL" id="X90765">
    <property type="protein sequence ID" value="CAA62290.1"/>
    <property type="molecule type" value="Genomic_DNA"/>
</dbReference>
<dbReference type="PIR" id="A48401">
    <property type="entry name" value="A48401"/>
</dbReference>
<dbReference type="RefSeq" id="WP_008633389.1">
    <property type="nucleotide sequence ID" value="NZ_VHHQ01000024.1"/>
</dbReference>
<dbReference type="PDB" id="4V8X">
    <property type="method" value="X-ray"/>
    <property type="resolution" value="3.35 A"/>
    <property type="chains" value="AE/CE=1-162"/>
</dbReference>
<dbReference type="PDBsum" id="4V8X"/>
<dbReference type="SMR" id="P27152"/>
<dbReference type="GeneID" id="3169827"/>
<dbReference type="OMA" id="GIKDVWT"/>
<dbReference type="GO" id="GO:0015935">
    <property type="term" value="C:small ribosomal subunit"/>
    <property type="evidence" value="ECO:0007669"/>
    <property type="project" value="InterPro"/>
</dbReference>
<dbReference type="GO" id="GO:0019843">
    <property type="term" value="F:rRNA binding"/>
    <property type="evidence" value="ECO:0007669"/>
    <property type="project" value="UniProtKB-UniRule"/>
</dbReference>
<dbReference type="GO" id="GO:0003735">
    <property type="term" value="F:structural constituent of ribosome"/>
    <property type="evidence" value="ECO:0007669"/>
    <property type="project" value="InterPro"/>
</dbReference>
<dbReference type="GO" id="GO:0006412">
    <property type="term" value="P:translation"/>
    <property type="evidence" value="ECO:0007669"/>
    <property type="project" value="UniProtKB-UniRule"/>
</dbReference>
<dbReference type="FunFam" id="3.30.230.10:FF:000002">
    <property type="entry name" value="30S ribosomal protein S5"/>
    <property type="match status" value="1"/>
</dbReference>
<dbReference type="Gene3D" id="3.30.160.20">
    <property type="match status" value="1"/>
</dbReference>
<dbReference type="Gene3D" id="3.30.230.10">
    <property type="match status" value="1"/>
</dbReference>
<dbReference type="HAMAP" id="MF_01307_B">
    <property type="entry name" value="Ribosomal_uS5_B"/>
    <property type="match status" value="1"/>
</dbReference>
<dbReference type="InterPro" id="IPR020568">
    <property type="entry name" value="Ribosomal_Su5_D2-typ_SF"/>
</dbReference>
<dbReference type="InterPro" id="IPR000851">
    <property type="entry name" value="Ribosomal_uS5"/>
</dbReference>
<dbReference type="InterPro" id="IPR005712">
    <property type="entry name" value="Ribosomal_uS5_bac-type"/>
</dbReference>
<dbReference type="InterPro" id="IPR005324">
    <property type="entry name" value="Ribosomal_uS5_C"/>
</dbReference>
<dbReference type="InterPro" id="IPR013810">
    <property type="entry name" value="Ribosomal_uS5_N"/>
</dbReference>
<dbReference type="InterPro" id="IPR018192">
    <property type="entry name" value="Ribosomal_uS5_N_CS"/>
</dbReference>
<dbReference type="InterPro" id="IPR014721">
    <property type="entry name" value="Ribsml_uS5_D2-typ_fold_subgr"/>
</dbReference>
<dbReference type="NCBIfam" id="TIGR01021">
    <property type="entry name" value="rpsE_bact"/>
    <property type="match status" value="1"/>
</dbReference>
<dbReference type="PANTHER" id="PTHR48277">
    <property type="entry name" value="MITOCHONDRIAL RIBOSOMAL PROTEIN S5"/>
    <property type="match status" value="1"/>
</dbReference>
<dbReference type="PANTHER" id="PTHR48277:SF1">
    <property type="entry name" value="MITOCHONDRIAL RIBOSOMAL PROTEIN S5"/>
    <property type="match status" value="1"/>
</dbReference>
<dbReference type="Pfam" id="PF00333">
    <property type="entry name" value="Ribosomal_S5"/>
    <property type="match status" value="1"/>
</dbReference>
<dbReference type="Pfam" id="PF03719">
    <property type="entry name" value="Ribosomal_S5_C"/>
    <property type="match status" value="1"/>
</dbReference>
<dbReference type="SUPFAM" id="SSF54768">
    <property type="entry name" value="dsRNA-binding domain-like"/>
    <property type="match status" value="1"/>
</dbReference>
<dbReference type="SUPFAM" id="SSF54211">
    <property type="entry name" value="Ribosomal protein S5 domain 2-like"/>
    <property type="match status" value="1"/>
</dbReference>
<dbReference type="PROSITE" id="PS00585">
    <property type="entry name" value="RIBOSOMAL_S5"/>
    <property type="match status" value="1"/>
</dbReference>
<dbReference type="PROSITE" id="PS50881">
    <property type="entry name" value="S5_DSRBD"/>
    <property type="match status" value="1"/>
</dbReference>
<sequence>MPETDFEEKMILIRRTARMQAGGRRFRFGALVVVGDRQGRVGLGFGKAPEVPLAVQKAGYYARRNMVEVPLQNGTIPHEIEVEFGASKIVLKPAAPGTGVIAGAVPRAILELAGVTDILTKELGSRNPINIAYATMEALRQLRTKADVERLRKGEAHAQAQG</sequence>
<comment type="function">
    <text evidence="1">With S4 and S12 plays an important role in translational accuracy.</text>
</comment>
<comment type="function">
    <text evidence="1">Located at the back of the 30S subunit body where it stabilizes the conformation of the head with respect to the body.</text>
</comment>
<comment type="subunit">
    <text evidence="1">Part of the 30S ribosomal subunit. Contacts proteins S4 and S8 (By similarity).</text>
</comment>
<comment type="domain">
    <text>The N-terminal domain interacts with the head of the 30S subunit; the C-terminal domain interacts with the body and contacts protein S4. The interaction surface between S4 and S5 is involved in control of translational fidelity.</text>
</comment>
<comment type="similarity">
    <text evidence="3">Belongs to the universal ribosomal protein uS5 family.</text>
</comment>